<sequence>MPLLDSFTVDHTRMNAPAVRVAKHMSTPKGDAITVFDLRFCAPNKDILSERGIHTLEHLFAGFMRDHLNGSDVEIIDISPMGCRTGFYMSLIGEPSERQVADAWLASMEDVLKVVEQSEIPELNEYQCGTYQMHSLEQAQDIARNIIAAGVSVNRNDDLKLSDEILGQL</sequence>
<evidence type="ECO:0000255" key="1">
    <source>
        <dbReference type="HAMAP-Rule" id="MF_00091"/>
    </source>
</evidence>
<protein>
    <recommendedName>
        <fullName evidence="1">S-ribosylhomocysteine lyase</fullName>
        <ecNumber evidence="1">4.4.1.21</ecNumber>
    </recommendedName>
    <alternativeName>
        <fullName evidence="1">AI-2 synthesis protein</fullName>
    </alternativeName>
    <alternativeName>
        <fullName evidence="1">Autoinducer-2 production protein LuxS</fullName>
    </alternativeName>
</protein>
<dbReference type="EC" id="4.4.1.21" evidence="1"/>
<dbReference type="EMBL" id="CP000444">
    <property type="protein sequence ID" value="ABI41971.1"/>
    <property type="molecule type" value="Genomic_DNA"/>
</dbReference>
<dbReference type="SMR" id="Q0HY34"/>
<dbReference type="KEGG" id="shm:Shewmr7_0972"/>
<dbReference type="HOGENOM" id="CLU_107531_2_0_6"/>
<dbReference type="GO" id="GO:0005506">
    <property type="term" value="F:iron ion binding"/>
    <property type="evidence" value="ECO:0007669"/>
    <property type="project" value="InterPro"/>
</dbReference>
<dbReference type="GO" id="GO:0043768">
    <property type="term" value="F:S-ribosylhomocysteine lyase activity"/>
    <property type="evidence" value="ECO:0007669"/>
    <property type="project" value="UniProtKB-UniRule"/>
</dbReference>
<dbReference type="GO" id="GO:0009372">
    <property type="term" value="P:quorum sensing"/>
    <property type="evidence" value="ECO:0007669"/>
    <property type="project" value="UniProtKB-UniRule"/>
</dbReference>
<dbReference type="FunFam" id="3.30.1360.80:FF:000001">
    <property type="entry name" value="S-ribosylhomocysteine lyase"/>
    <property type="match status" value="1"/>
</dbReference>
<dbReference type="Gene3D" id="3.30.1360.80">
    <property type="entry name" value="S-ribosylhomocysteinase (LuxS)"/>
    <property type="match status" value="1"/>
</dbReference>
<dbReference type="HAMAP" id="MF_00091">
    <property type="entry name" value="LuxS"/>
    <property type="match status" value="1"/>
</dbReference>
<dbReference type="InterPro" id="IPR037005">
    <property type="entry name" value="LuxS_sf"/>
</dbReference>
<dbReference type="InterPro" id="IPR011249">
    <property type="entry name" value="Metalloenz_LuxS/M16"/>
</dbReference>
<dbReference type="InterPro" id="IPR003815">
    <property type="entry name" value="S-ribosylhomocysteinase"/>
</dbReference>
<dbReference type="NCBIfam" id="NF002602">
    <property type="entry name" value="PRK02260.1-2"/>
    <property type="match status" value="1"/>
</dbReference>
<dbReference type="PANTHER" id="PTHR35799">
    <property type="entry name" value="S-RIBOSYLHOMOCYSTEINE LYASE"/>
    <property type="match status" value="1"/>
</dbReference>
<dbReference type="PANTHER" id="PTHR35799:SF1">
    <property type="entry name" value="S-RIBOSYLHOMOCYSTEINE LYASE"/>
    <property type="match status" value="1"/>
</dbReference>
<dbReference type="Pfam" id="PF02664">
    <property type="entry name" value="LuxS"/>
    <property type="match status" value="1"/>
</dbReference>
<dbReference type="PIRSF" id="PIRSF006160">
    <property type="entry name" value="AI2"/>
    <property type="match status" value="1"/>
</dbReference>
<dbReference type="PRINTS" id="PR01487">
    <property type="entry name" value="LUXSPROTEIN"/>
</dbReference>
<dbReference type="SUPFAM" id="SSF63411">
    <property type="entry name" value="LuxS/MPP-like metallohydrolase"/>
    <property type="match status" value="1"/>
</dbReference>
<accession>Q0HY34</accession>
<gene>
    <name evidence="1" type="primary">luxS</name>
    <name type="ordered locus">Shewmr7_0972</name>
</gene>
<name>LUXS_SHESR</name>
<reference key="1">
    <citation type="submission" date="2006-08" db="EMBL/GenBank/DDBJ databases">
        <title>Complete sequence of chromosome 1 of Shewanella sp. MR-7.</title>
        <authorList>
            <person name="Copeland A."/>
            <person name="Lucas S."/>
            <person name="Lapidus A."/>
            <person name="Barry K."/>
            <person name="Detter J.C."/>
            <person name="Glavina del Rio T."/>
            <person name="Hammon N."/>
            <person name="Israni S."/>
            <person name="Dalin E."/>
            <person name="Tice H."/>
            <person name="Pitluck S."/>
            <person name="Kiss H."/>
            <person name="Brettin T."/>
            <person name="Bruce D."/>
            <person name="Han C."/>
            <person name="Tapia R."/>
            <person name="Gilna P."/>
            <person name="Schmutz J."/>
            <person name="Larimer F."/>
            <person name="Land M."/>
            <person name="Hauser L."/>
            <person name="Kyrpides N."/>
            <person name="Mikhailova N."/>
            <person name="Nealson K."/>
            <person name="Konstantinidis K."/>
            <person name="Klappenbach J."/>
            <person name="Tiedje J."/>
            <person name="Richardson P."/>
        </authorList>
    </citation>
    <scope>NUCLEOTIDE SEQUENCE [LARGE SCALE GENOMIC DNA]</scope>
    <source>
        <strain>MR-7</strain>
    </source>
</reference>
<feature type="chain" id="PRO_0000298028" description="S-ribosylhomocysteine lyase">
    <location>
        <begin position="1"/>
        <end position="169"/>
    </location>
</feature>
<feature type="binding site" evidence="1">
    <location>
        <position position="54"/>
    </location>
    <ligand>
        <name>Fe cation</name>
        <dbReference type="ChEBI" id="CHEBI:24875"/>
    </ligand>
</feature>
<feature type="binding site" evidence="1">
    <location>
        <position position="58"/>
    </location>
    <ligand>
        <name>Fe cation</name>
        <dbReference type="ChEBI" id="CHEBI:24875"/>
    </ligand>
</feature>
<feature type="binding site" evidence="1">
    <location>
        <position position="128"/>
    </location>
    <ligand>
        <name>Fe cation</name>
        <dbReference type="ChEBI" id="CHEBI:24875"/>
    </ligand>
</feature>
<proteinExistence type="inferred from homology"/>
<organism>
    <name type="scientific">Shewanella sp. (strain MR-7)</name>
    <dbReference type="NCBI Taxonomy" id="60481"/>
    <lineage>
        <taxon>Bacteria</taxon>
        <taxon>Pseudomonadati</taxon>
        <taxon>Pseudomonadota</taxon>
        <taxon>Gammaproteobacteria</taxon>
        <taxon>Alteromonadales</taxon>
        <taxon>Shewanellaceae</taxon>
        <taxon>Shewanella</taxon>
    </lineage>
</organism>
<keyword id="KW-0071">Autoinducer synthesis</keyword>
<keyword id="KW-0408">Iron</keyword>
<keyword id="KW-0456">Lyase</keyword>
<keyword id="KW-0479">Metal-binding</keyword>
<keyword id="KW-0673">Quorum sensing</keyword>
<comment type="function">
    <text evidence="1">Involved in the synthesis of autoinducer 2 (AI-2) which is secreted by bacteria and is used to communicate both the cell density and the metabolic potential of the environment. The regulation of gene expression in response to changes in cell density is called quorum sensing. Catalyzes the transformation of S-ribosylhomocysteine (RHC) to homocysteine (HC) and 4,5-dihydroxy-2,3-pentadione (DPD).</text>
</comment>
<comment type="catalytic activity">
    <reaction evidence="1">
        <text>S-(5-deoxy-D-ribos-5-yl)-L-homocysteine = (S)-4,5-dihydroxypentane-2,3-dione + L-homocysteine</text>
        <dbReference type="Rhea" id="RHEA:17753"/>
        <dbReference type="ChEBI" id="CHEBI:29484"/>
        <dbReference type="ChEBI" id="CHEBI:58195"/>
        <dbReference type="ChEBI" id="CHEBI:58199"/>
        <dbReference type="EC" id="4.4.1.21"/>
    </reaction>
</comment>
<comment type="cofactor">
    <cofactor evidence="1">
        <name>Fe cation</name>
        <dbReference type="ChEBI" id="CHEBI:24875"/>
    </cofactor>
    <text evidence="1">Binds 1 Fe cation per subunit.</text>
</comment>
<comment type="subunit">
    <text evidence="1">Homodimer.</text>
</comment>
<comment type="similarity">
    <text evidence="1">Belongs to the LuxS family.</text>
</comment>